<name>RL15_NEUCR</name>
<keyword id="KW-0002">3D-structure</keyword>
<keyword id="KW-0963">Cytoplasm</keyword>
<keyword id="KW-1185">Reference proteome</keyword>
<keyword id="KW-0687">Ribonucleoprotein</keyword>
<keyword id="KW-0689">Ribosomal protein</keyword>
<sequence length="203" mass="24190">MGALKYLEELQKKKQSDVVRFLLRVRCWELRQLNVIHRASRPSRPDKARRLGYKAKQGYVIYRARVRRGGRKKPVPKGATYGKPTNQGVNQLKYQRSLKSTAEERVGRRCANLRVLNSYWINQDSTYKYFEVILVDPQHKAIRRDPRINWIVNPVHKHRESRGLTSTGKRSRGLNKGHRYNKTRAGRRKTWKRHNTLSLWRYR</sequence>
<evidence type="ECO:0000256" key="1">
    <source>
        <dbReference type="SAM" id="MobiDB-lite"/>
    </source>
</evidence>
<evidence type="ECO:0000269" key="2">
    <source>
    </source>
</evidence>
<evidence type="ECO:0000303" key="3">
    <source>
    </source>
</evidence>
<evidence type="ECO:0000305" key="4"/>
<evidence type="ECO:0000305" key="5">
    <source>
    </source>
</evidence>
<evidence type="ECO:0007744" key="6">
    <source>
        <dbReference type="PDB" id="7R81"/>
    </source>
</evidence>
<feature type="chain" id="PRO_0000127563" description="Large ribosomal subunit protein eL15">
    <location>
        <begin position="1"/>
        <end position="203"/>
    </location>
</feature>
<feature type="region of interest" description="Disordered" evidence="1">
    <location>
        <begin position="160"/>
        <end position="186"/>
    </location>
</feature>
<feature type="compositionally biased region" description="Basic residues" evidence="1">
    <location>
        <begin position="169"/>
        <end position="186"/>
    </location>
</feature>
<organism>
    <name type="scientific">Neurospora crassa (strain ATCC 24698 / 74-OR23-1A / CBS 708.71 / DSM 1257 / FGSC 987)</name>
    <dbReference type="NCBI Taxonomy" id="367110"/>
    <lineage>
        <taxon>Eukaryota</taxon>
        <taxon>Fungi</taxon>
        <taxon>Dikarya</taxon>
        <taxon>Ascomycota</taxon>
        <taxon>Pezizomycotina</taxon>
        <taxon>Sordariomycetes</taxon>
        <taxon>Sordariomycetidae</taxon>
        <taxon>Sordariales</taxon>
        <taxon>Sordariaceae</taxon>
        <taxon>Neurospora</taxon>
    </lineage>
</organism>
<comment type="function">
    <text evidence="5">Component of the ribosome, a large ribonucleoprotein complex responsible for the synthesis of proteins in the cell. The small ribosomal subunit (SSU) binds messenger RNAs (mRNAs) and translates the encoded message by selecting cognate aminoacyl-transfer RNA (tRNA) molecules. The large subunit (LSU) contains the ribosomal catalytic site termed the peptidyl transferase center (PTC), which catalyzes the formation of peptide bonds, thereby polymerizing the amino acids delivered by tRNAs into a polypeptide chain. The nascent polypeptides leave the ribosome through a tunnel in the LSU and interact with protein factors that function in enzymatic processing, targeting, and the membrane insertion of nascent chains at the exit of the ribosomal tunnel.</text>
</comment>
<comment type="subunit">
    <text evidence="2">Component of the large ribosomal subunit (LSU). Mature N.crassa ribosomes consist of a small (40S) and a large (60S) subunit. The 40S small subunit contains 1 molecule of ribosomal RNA (18S rRNA) and at least 32 different proteins. The large 60S subunit contains 3 rRNA molecules (26S, 5.8S and 5S rRNA) and at least 42 different proteins.</text>
</comment>
<comment type="subcellular location">
    <subcellularLocation>
        <location evidence="2">Cytoplasm</location>
    </subcellularLocation>
</comment>
<comment type="similarity">
    <text evidence="4">Belongs to the eukaryotic ribosomal protein eL15 family.</text>
</comment>
<proteinExistence type="evidence at protein level"/>
<gene>
    <name type="primary">rpl-15</name>
    <name type="ORF">B21D9.030</name>
    <name type="ORF">NCU01776</name>
</gene>
<protein>
    <recommendedName>
        <fullName evidence="3">Large ribosomal subunit protein eL15</fullName>
    </recommendedName>
    <alternativeName>
        <fullName>60S ribosomal protein L15</fullName>
    </alternativeName>
</protein>
<reference key="1">
    <citation type="journal article" date="2003" name="Nucleic Acids Res.">
        <title>What's in the genome of a filamentous fungus? Analysis of the Neurospora genome sequence.</title>
        <authorList>
            <person name="Mannhaupt G."/>
            <person name="Montrone C."/>
            <person name="Haase D."/>
            <person name="Mewes H.-W."/>
            <person name="Aign V."/>
            <person name="Hoheisel J.D."/>
            <person name="Fartmann B."/>
            <person name="Nyakatura G."/>
            <person name="Kempken F."/>
            <person name="Maier J."/>
            <person name="Schulte U."/>
        </authorList>
    </citation>
    <scope>NUCLEOTIDE SEQUENCE [LARGE SCALE GENOMIC DNA]</scope>
    <source>
        <strain>ATCC 24698 / 74-OR23-1A / CBS 708.71 / DSM 1257 / FGSC 987</strain>
    </source>
</reference>
<reference key="2">
    <citation type="journal article" date="2003" name="Nature">
        <title>The genome sequence of the filamentous fungus Neurospora crassa.</title>
        <authorList>
            <person name="Galagan J.E."/>
            <person name="Calvo S.E."/>
            <person name="Borkovich K.A."/>
            <person name="Selker E.U."/>
            <person name="Read N.D."/>
            <person name="Jaffe D.B."/>
            <person name="FitzHugh W."/>
            <person name="Ma L.-J."/>
            <person name="Smirnov S."/>
            <person name="Purcell S."/>
            <person name="Rehman B."/>
            <person name="Elkins T."/>
            <person name="Engels R."/>
            <person name="Wang S."/>
            <person name="Nielsen C.B."/>
            <person name="Butler J."/>
            <person name="Endrizzi M."/>
            <person name="Qui D."/>
            <person name="Ianakiev P."/>
            <person name="Bell-Pedersen D."/>
            <person name="Nelson M.A."/>
            <person name="Werner-Washburne M."/>
            <person name="Selitrennikoff C.P."/>
            <person name="Kinsey J.A."/>
            <person name="Braun E.L."/>
            <person name="Zelter A."/>
            <person name="Schulte U."/>
            <person name="Kothe G.O."/>
            <person name="Jedd G."/>
            <person name="Mewes H.-W."/>
            <person name="Staben C."/>
            <person name="Marcotte E."/>
            <person name="Greenberg D."/>
            <person name="Roy A."/>
            <person name="Foley K."/>
            <person name="Naylor J."/>
            <person name="Stange-Thomann N."/>
            <person name="Barrett R."/>
            <person name="Gnerre S."/>
            <person name="Kamal M."/>
            <person name="Kamvysselis M."/>
            <person name="Mauceli E.W."/>
            <person name="Bielke C."/>
            <person name="Rudd S."/>
            <person name="Frishman D."/>
            <person name="Krystofova S."/>
            <person name="Rasmussen C."/>
            <person name="Metzenberg R.L."/>
            <person name="Perkins D.D."/>
            <person name="Kroken S."/>
            <person name="Cogoni C."/>
            <person name="Macino G."/>
            <person name="Catcheside D.E.A."/>
            <person name="Li W."/>
            <person name="Pratt R.J."/>
            <person name="Osmani S.A."/>
            <person name="DeSouza C.P.C."/>
            <person name="Glass N.L."/>
            <person name="Orbach M.J."/>
            <person name="Berglund J.A."/>
            <person name="Voelker R."/>
            <person name="Yarden O."/>
            <person name="Plamann M."/>
            <person name="Seiler S."/>
            <person name="Dunlap J.C."/>
            <person name="Radford A."/>
            <person name="Aramayo R."/>
            <person name="Natvig D.O."/>
            <person name="Alex L.A."/>
            <person name="Mannhaupt G."/>
            <person name="Ebbole D.J."/>
            <person name="Freitag M."/>
            <person name="Paulsen I."/>
            <person name="Sachs M.S."/>
            <person name="Lander E.S."/>
            <person name="Nusbaum C."/>
            <person name="Birren B.W."/>
        </authorList>
    </citation>
    <scope>NUCLEOTIDE SEQUENCE [LARGE SCALE GENOMIC DNA]</scope>
    <source>
        <strain>ATCC 24698 / 74-OR23-1A / CBS 708.71 / DSM 1257 / FGSC 987</strain>
    </source>
</reference>
<reference evidence="6" key="3">
    <citation type="journal article" date="2021" name="Proc. Natl. Acad. Sci. U.S.A.">
        <title>Structure of the translating Neurospora ribosome arrested by cycloheximide.</title>
        <authorList>
            <person name="Shen L."/>
            <person name="Su Z."/>
            <person name="Yang K."/>
            <person name="Wu C."/>
            <person name="Becker T."/>
            <person name="Bell-Pedersen D."/>
            <person name="Zhang J."/>
            <person name="Sachs M.S."/>
        </authorList>
    </citation>
    <scope>STRUCTURE BY ELECTRON MICROSCOPY (2.70 ANGSTROMS)</scope>
</reference>
<dbReference type="EMBL" id="AL669999">
    <property type="protein sequence ID" value="CAD21192.1"/>
    <property type="molecule type" value="Genomic_DNA"/>
</dbReference>
<dbReference type="EMBL" id="CM002237">
    <property type="protein sequence ID" value="EAA27963.1"/>
    <property type="molecule type" value="Genomic_DNA"/>
</dbReference>
<dbReference type="RefSeq" id="XP_957199.1">
    <property type="nucleotide sequence ID" value="XM_952106.3"/>
</dbReference>
<dbReference type="PDB" id="7R81">
    <property type="method" value="EM"/>
    <property type="resolution" value="2.70 A"/>
    <property type="chains" value="P1=1-203"/>
</dbReference>
<dbReference type="PDBsum" id="7R81"/>
<dbReference type="EMDB" id="EMD-24307"/>
<dbReference type="SMR" id="Q8X034"/>
<dbReference type="FunCoup" id="Q8X034">
    <property type="interactions" value="1232"/>
</dbReference>
<dbReference type="STRING" id="367110.Q8X034"/>
<dbReference type="PaxDb" id="5141-EFNCRP00000001776"/>
<dbReference type="EnsemblFungi" id="EAA27963">
    <property type="protein sequence ID" value="EAA27963"/>
    <property type="gene ID" value="NCU01776"/>
</dbReference>
<dbReference type="GeneID" id="3873305"/>
<dbReference type="KEGG" id="ncr:NCU01776"/>
<dbReference type="VEuPathDB" id="FungiDB:NCU01776"/>
<dbReference type="HOGENOM" id="CLU_080796_0_0_1"/>
<dbReference type="InParanoid" id="Q8X034"/>
<dbReference type="OrthoDB" id="10255148at2759"/>
<dbReference type="Proteomes" id="UP000001805">
    <property type="component" value="Chromosome 6, Linkage Group II"/>
</dbReference>
<dbReference type="GO" id="GO:0022625">
    <property type="term" value="C:cytosolic large ribosomal subunit"/>
    <property type="evidence" value="ECO:0000318"/>
    <property type="project" value="GO_Central"/>
</dbReference>
<dbReference type="GO" id="GO:0003723">
    <property type="term" value="F:RNA binding"/>
    <property type="evidence" value="ECO:0000318"/>
    <property type="project" value="GO_Central"/>
</dbReference>
<dbReference type="GO" id="GO:0003735">
    <property type="term" value="F:structural constituent of ribosome"/>
    <property type="evidence" value="ECO:0000318"/>
    <property type="project" value="GO_Central"/>
</dbReference>
<dbReference type="GO" id="GO:0002181">
    <property type="term" value="P:cytoplasmic translation"/>
    <property type="evidence" value="ECO:0000318"/>
    <property type="project" value="GO_Central"/>
</dbReference>
<dbReference type="FunFam" id="3.40.1120.10:FF:000001">
    <property type="entry name" value="Ribosomal protein L15"/>
    <property type="match status" value="1"/>
</dbReference>
<dbReference type="Gene3D" id="3.40.1120.10">
    <property type="entry name" value="Ribosomal protein l15e"/>
    <property type="match status" value="1"/>
</dbReference>
<dbReference type="InterPro" id="IPR024794">
    <property type="entry name" value="Rbsml_eL15_core_dom_sf"/>
</dbReference>
<dbReference type="InterPro" id="IPR000439">
    <property type="entry name" value="Ribosomal_eL15"/>
</dbReference>
<dbReference type="InterPro" id="IPR020925">
    <property type="entry name" value="Ribosomal_eL15_CS"/>
</dbReference>
<dbReference type="InterPro" id="IPR012678">
    <property type="entry name" value="Ribosomal_uL23/eL15/eS24_sf"/>
</dbReference>
<dbReference type="NCBIfam" id="NF003269">
    <property type="entry name" value="PRK04243.1"/>
    <property type="match status" value="1"/>
</dbReference>
<dbReference type="PANTHER" id="PTHR11847:SF4">
    <property type="entry name" value="LARGE RIBOSOMAL SUBUNIT PROTEIN EL15"/>
    <property type="match status" value="1"/>
</dbReference>
<dbReference type="PANTHER" id="PTHR11847">
    <property type="entry name" value="RIBOSOMAL PROTEIN L15"/>
    <property type="match status" value="1"/>
</dbReference>
<dbReference type="Pfam" id="PF00827">
    <property type="entry name" value="Ribosomal_L15e"/>
    <property type="match status" value="1"/>
</dbReference>
<dbReference type="SMART" id="SM01384">
    <property type="entry name" value="Ribosomal_L15e"/>
    <property type="match status" value="1"/>
</dbReference>
<dbReference type="SUPFAM" id="SSF54189">
    <property type="entry name" value="Ribosomal proteins S24e, L23 and L15e"/>
    <property type="match status" value="1"/>
</dbReference>
<dbReference type="PROSITE" id="PS01194">
    <property type="entry name" value="RIBOSOMAL_L15E"/>
    <property type="match status" value="1"/>
</dbReference>
<accession>Q8X034</accession>
<accession>Q7RV64</accession>